<organism>
    <name type="scientific">Human immunodeficiency virus type 1 group M subtype B (isolate NY5)</name>
    <name type="common">HIV-1</name>
    <dbReference type="NCBI Taxonomy" id="11698"/>
    <lineage>
        <taxon>Viruses</taxon>
        <taxon>Riboviria</taxon>
        <taxon>Pararnavirae</taxon>
        <taxon>Artverviricota</taxon>
        <taxon>Revtraviricetes</taxon>
        <taxon>Ortervirales</taxon>
        <taxon>Retroviridae</taxon>
        <taxon>Orthoretrovirinae</taxon>
        <taxon>Lentivirus</taxon>
        <taxon>Human immunodeficiency virus type 1</taxon>
    </lineage>
</organism>
<gene>
    <name type="primary">gag</name>
</gene>
<proteinExistence type="evidence at protein level"/>
<feature type="initiator methionine" description="Removed; by host" evidence="1">
    <location>
        <position position="1"/>
    </location>
</feature>
<feature type="chain" id="PRO_0000261226" description="Gag polyprotein">
    <location>
        <begin position="2"/>
        <end position="500"/>
    </location>
</feature>
<feature type="chain" id="PRO_0000038559" description="Matrix protein p17" evidence="1">
    <location>
        <begin position="2"/>
        <end position="132"/>
    </location>
</feature>
<feature type="chain" id="PRO_0000038560" description="Capsid protein p24" evidence="1">
    <location>
        <begin position="133"/>
        <end position="363"/>
    </location>
</feature>
<feature type="peptide" id="PRO_0000038561" description="Spacer peptide 1" evidence="1">
    <location>
        <begin position="364"/>
        <end position="377"/>
    </location>
</feature>
<feature type="chain" id="PRO_0000038562" description="Nucleocapsid protein p7" evidence="1">
    <location>
        <begin position="378"/>
        <end position="432"/>
    </location>
</feature>
<feature type="peptide" id="PRO_0000038563" description="Spacer peptide 2" evidence="1">
    <location>
        <begin position="433"/>
        <end position="448"/>
    </location>
</feature>
<feature type="chain" id="PRO_0000038564" description="p6-gag" evidence="1">
    <location>
        <begin position="449"/>
        <end position="500"/>
    </location>
</feature>
<feature type="zinc finger region" description="CCHC-type 1" evidence="6">
    <location>
        <begin position="390"/>
        <end position="407"/>
    </location>
</feature>
<feature type="zinc finger region" description="CCHC-type 2" evidence="6">
    <location>
        <begin position="411"/>
        <end position="428"/>
    </location>
</feature>
<feature type="region of interest" description="Interaction with Gp41" evidence="23">
    <location>
        <begin position="7"/>
        <end position="31"/>
    </location>
</feature>
<feature type="region of interest" description="Interaction with host CALM1" evidence="5">
    <location>
        <begin position="8"/>
        <end position="43"/>
    </location>
</feature>
<feature type="region of interest" description="Interaction with host AP3D1" evidence="11">
    <location>
        <begin position="12"/>
        <end position="19"/>
    </location>
</feature>
<feature type="region of interest" description="Interaction with membrane phosphatidylinositol 4,5-bisphosphate and RNA" evidence="12">
    <location>
        <begin position="14"/>
        <end position="33"/>
    </location>
</feature>
<feature type="region of interest" description="Interaction with membrane phosphatidylinositol 4,5-bisphosphate" evidence="12">
    <location>
        <begin position="73"/>
        <end position="77"/>
    </location>
</feature>
<feature type="region of interest" description="Disordered" evidence="7">
    <location>
        <begin position="106"/>
        <end position="128"/>
    </location>
</feature>
<feature type="region of interest" description="Interaction with human PPIA/CYPA and NUP153" evidence="20 24">
    <location>
        <begin position="189"/>
        <end position="227"/>
    </location>
</feature>
<feature type="region of interest" description="PPIA/CYPA-binding loop" evidence="5">
    <location>
        <begin position="217"/>
        <end position="225"/>
    </location>
</feature>
<feature type="region of interest" description="Dimerization/Multimerization of capsid protein p24" evidence="5">
    <location>
        <begin position="277"/>
        <end position="363"/>
    </location>
</feature>
<feature type="region of interest" description="Disordered" evidence="7">
    <location>
        <begin position="438"/>
        <end position="482"/>
    </location>
</feature>
<feature type="short sequence motif" description="Nuclear export signal" evidence="1">
    <location>
        <begin position="16"/>
        <end position="22"/>
    </location>
</feature>
<feature type="short sequence motif" description="Nuclear localization signal" evidence="1">
    <location>
        <begin position="26"/>
        <end position="32"/>
    </location>
</feature>
<feature type="short sequence motif" description="PTAP/PSAP motif">
    <location>
        <begin position="455"/>
        <end position="458"/>
    </location>
</feature>
<feature type="short sequence motif" description="LYPX(n)L motif">
    <location>
        <begin position="483"/>
        <end position="492"/>
    </location>
</feature>
<feature type="site" description="Cleavage; by viral protease" evidence="1">
    <location>
        <begin position="132"/>
        <end position="133"/>
    </location>
</feature>
<feature type="site" description="Cleavage; by viral protease" evidence="1">
    <location>
        <begin position="363"/>
        <end position="364"/>
    </location>
</feature>
<feature type="site" description="Cleavage; by viral protease" evidence="1">
    <location>
        <begin position="377"/>
        <end position="378"/>
    </location>
</feature>
<feature type="site" description="Cleavage; by viral protease" evidence="1">
    <location>
        <begin position="432"/>
        <end position="433"/>
    </location>
</feature>
<feature type="site" description="Cleavage; by viral protease" evidence="1">
    <location>
        <begin position="448"/>
        <end position="449"/>
    </location>
</feature>
<feature type="modified residue" description="Phosphoserine; by host MAPK1" evidence="21">
    <location>
        <position position="148"/>
    </location>
</feature>
<feature type="modified residue" description="Asymmetric dimethylarginine; in Nucleocapsid protein p7; by host PRMT6" evidence="1">
    <location>
        <position position="387"/>
    </location>
</feature>
<feature type="modified residue" description="Asymmetric dimethylarginine; in Nucleocapsid protein p7; by host PRMT6" evidence="1">
    <location>
        <position position="409"/>
    </location>
</feature>
<feature type="lipid moiety-binding region" description="N-myristoyl glycine; by host" evidence="1">
    <location>
        <position position="2"/>
    </location>
</feature>
<feature type="mutagenesis site" description="Loss of ability to fuse with target cell membranes and infect host cell." evidence="13">
    <original>S</original>
    <variation>A</variation>
    <location>
        <position position="9"/>
    </location>
</feature>
<feature type="mutagenesis site" description="Loss of ability to fuse with target cell membranes and infect host cell." evidence="13">
    <original>S</original>
    <variation>A</variation>
    <location>
        <position position="67"/>
    </location>
</feature>
<feature type="mutagenesis site" description="Loss of ability to fuse with target cell membranes and infect host cell." evidence="13">
    <original>S</original>
    <variation>A</variation>
    <location>
        <position position="72"/>
    </location>
</feature>
<feature type="mutagenesis site" description="Loss of ability to fuse with target cell membranes and infect host cell." evidence="13">
    <original>S</original>
    <variation>A</variation>
    <location>
        <position position="77"/>
    </location>
</feature>
<feature type="mutagenesis site" description="Loss of infectivity." evidence="22">
    <original>P</original>
    <variation>A</variation>
    <location>
        <position position="166"/>
    </location>
</feature>
<feature type="mutagenesis site" description="Loss of infectivity." evidence="22">
    <original>I</original>
    <variation>S</variation>
    <location>
        <position position="169"/>
    </location>
</feature>
<feature type="mutagenesis site" description="Retains infectivity." evidence="22">
    <original>P</original>
    <variation>A</variation>
    <location>
        <position position="170"/>
    </location>
</feature>
<feature type="mutagenesis site" description="Loss of infectivity." evidence="22">
    <original>N</original>
    <variation>L</variation>
    <location>
        <position position="185"/>
    </location>
</feature>
<feature type="mutagenesis site" description="Loss of infectivity." evidence="22">
    <original>L</original>
    <variation>S</variation>
    <location>
        <position position="188"/>
    </location>
</feature>
<feature type="mutagenesis site" description="Reduces binding to human NUP153 and CPSF6. Reduces infectivity to non-dividing cells. Retains infectivity to dividing cells." evidence="20 22">
    <original>N</original>
    <variation>A</variation>
    <location>
        <position position="189"/>
    </location>
</feature>
<feature type="mutagenesis site" description="Reduces binding to human NUP153. Does not affect binding to CPSF6. Reduces infectivity to non-dividing cells. Retains infectivity to dividing cells." evidence="20 22">
    <original>N</original>
    <variation>D</variation>
    <location>
        <position position="189"/>
    </location>
</feature>
<feature type="mutagenesis site" description="Reduces protein stability. Loss of binding to FG repeats of human NUP153. Loss of binding to CPSF6. Decreases virus ability to integrate in intrafenic regions compared to wild-type virus. Reduces infectivity to non-dividing cells; virus undergo reverse transcription but not nuclear translocation. Retains infectivity to dividing cells." evidence="22">
    <original>N</original>
    <variation>S</variation>
    <location>
        <position position="189"/>
    </location>
</feature>
<feature type="mutagenesis site" description="Loss of infectivity." evidence="22">
    <original>V</original>
    <variation>A</variation>
    <location>
        <position position="191"/>
    </location>
</feature>
<feature type="mutagenesis site" description="Loss of binding to NUP153 and CPSF6." evidence="20">
    <original>N</original>
    <variation>A</variation>
    <location>
        <position position="206"/>
    </location>
</feature>
<feature type="mutagenesis site" description="Loss of binding to CPSF6. Does not affect binding to NUP153. Retains infectivity to non-dividing cells." evidence="17 20 22">
    <original>N</original>
    <variation>D</variation>
    <location>
        <position position="206"/>
    </location>
</feature>
<feature type="mutagenesis site" description="Loss of infectivity." evidence="22">
    <original>V</original>
    <variation>T</variation>
    <location>
        <position position="274"/>
    </location>
</feature>
<feature type="mutagenesis site" description="Does not bind FG repeats of human NUP153. Loss of infectivity." evidence="22">
    <original>R</original>
    <variation>A</variation>
    <location>
        <position position="305"/>
    </location>
</feature>
<feature type="mutagenesis site" description="Retains binding to FG repeats of human NUP153." evidence="22">
    <original>R</original>
    <variation>K</variation>
    <location>
        <position position="305"/>
    </location>
</feature>
<feature type="mutagenesis site" description="Retains infectivity." evidence="22">
    <original>Q</original>
    <variation>A</variation>
    <location>
        <position position="308"/>
    </location>
</feature>
<feature type="helix" evidence="36">
    <location>
        <begin position="3"/>
        <end position="7"/>
    </location>
</feature>
<feature type="helix" evidence="34">
    <location>
        <begin position="10"/>
        <end position="16"/>
    </location>
</feature>
<feature type="strand" evidence="34">
    <location>
        <begin position="19"/>
        <end position="22"/>
    </location>
</feature>
<feature type="helix" evidence="34">
    <location>
        <begin position="31"/>
        <end position="43"/>
    </location>
</feature>
<feature type="helix" evidence="34">
    <location>
        <begin position="48"/>
        <end position="52"/>
    </location>
</feature>
<feature type="helix" evidence="34">
    <location>
        <begin position="54"/>
        <end position="64"/>
    </location>
</feature>
<feature type="helix" evidence="34">
    <location>
        <begin position="65"/>
        <end position="67"/>
    </location>
</feature>
<feature type="turn" evidence="36">
    <location>
        <begin position="68"/>
        <end position="70"/>
    </location>
</feature>
<feature type="helix" evidence="34">
    <location>
        <begin position="73"/>
        <end position="89"/>
    </location>
</feature>
<feature type="helix" evidence="34">
    <location>
        <begin position="97"/>
        <end position="109"/>
    </location>
</feature>
<feature type="helix" evidence="34">
    <location>
        <begin position="111"/>
        <end position="116"/>
    </location>
</feature>
<feature type="strand" evidence="40">
    <location>
        <begin position="134"/>
        <end position="136"/>
    </location>
</feature>
<feature type="strand" evidence="39">
    <location>
        <begin position="138"/>
        <end position="140"/>
    </location>
</feature>
<feature type="strand" evidence="40">
    <location>
        <begin position="142"/>
        <end position="144"/>
    </location>
</feature>
<feature type="helix" evidence="40">
    <location>
        <begin position="149"/>
        <end position="162"/>
    </location>
</feature>
<feature type="helix" evidence="40">
    <location>
        <begin position="168"/>
        <end position="175"/>
    </location>
</feature>
<feature type="turn" evidence="40">
    <location>
        <begin position="176"/>
        <end position="178"/>
    </location>
</feature>
<feature type="helix" evidence="40">
    <location>
        <begin position="181"/>
        <end position="189"/>
    </location>
</feature>
<feature type="turn" evidence="37">
    <location>
        <begin position="190"/>
        <end position="193"/>
    </location>
</feature>
<feature type="helix" evidence="40">
    <location>
        <begin position="195"/>
        <end position="215"/>
    </location>
</feature>
<feature type="helix" evidence="33">
    <location>
        <begin position="217"/>
        <end position="219"/>
    </location>
</feature>
<feature type="strand" evidence="30">
    <location>
        <begin position="225"/>
        <end position="227"/>
    </location>
</feature>
<feature type="helix" evidence="40">
    <location>
        <begin position="233"/>
        <end position="236"/>
    </location>
</feature>
<feature type="strand" evidence="40">
    <location>
        <begin position="239"/>
        <end position="241"/>
    </location>
</feature>
<feature type="helix" evidence="40">
    <location>
        <begin position="243"/>
        <end position="251"/>
    </location>
</feature>
<feature type="strand" evidence="40">
    <location>
        <begin position="252"/>
        <end position="254"/>
    </location>
</feature>
<feature type="helix" evidence="40">
    <location>
        <begin position="258"/>
        <end position="277"/>
    </location>
</feature>
<feature type="helix" evidence="40">
    <location>
        <begin position="282"/>
        <end position="284"/>
    </location>
</feature>
<feature type="strand" evidence="35">
    <location>
        <begin position="289"/>
        <end position="291"/>
    </location>
</feature>
<feature type="helix" evidence="40">
    <location>
        <begin position="293"/>
        <end position="307"/>
    </location>
</feature>
<feature type="turn" evidence="31">
    <location>
        <begin position="308"/>
        <end position="310"/>
    </location>
</feature>
<feature type="helix" evidence="40">
    <location>
        <begin position="311"/>
        <end position="316"/>
    </location>
</feature>
<feature type="helix" evidence="40">
    <location>
        <begin position="317"/>
        <end position="319"/>
    </location>
</feature>
<feature type="helix" evidence="40">
    <location>
        <begin position="321"/>
        <end position="324"/>
    </location>
</feature>
<feature type="helix" evidence="40">
    <location>
        <begin position="328"/>
        <end position="336"/>
    </location>
</feature>
<feature type="helix" evidence="32">
    <location>
        <begin position="338"/>
        <end position="340"/>
    </location>
</feature>
<feature type="helix" evidence="40">
    <location>
        <begin position="343"/>
        <end position="349"/>
    </location>
</feature>
<feature type="turn" evidence="38">
    <location>
        <begin position="350"/>
        <end position="352"/>
    </location>
</feature>
<feature type="turn" evidence="33">
    <location>
        <begin position="353"/>
        <end position="357"/>
    </location>
</feature>
<feature type="helix" evidence="32">
    <location>
        <begin position="359"/>
        <end position="371"/>
    </location>
</feature>
<feature type="helix" evidence="32">
    <location>
        <begin position="374"/>
        <end position="381"/>
    </location>
</feature>
<feature type="turn" evidence="32">
    <location>
        <begin position="382"/>
        <end position="384"/>
    </location>
</feature>
<feature type="helix" evidence="32">
    <location>
        <begin position="388"/>
        <end position="390"/>
    </location>
</feature>
<feature type="turn" evidence="32">
    <location>
        <begin position="393"/>
        <end position="395"/>
    </location>
</feature>
<feature type="turn" evidence="32">
    <location>
        <begin position="402"/>
        <end position="404"/>
    </location>
</feature>
<feature type="strand" evidence="32">
    <location>
        <begin position="410"/>
        <end position="412"/>
    </location>
</feature>
<feature type="turn" evidence="32">
    <location>
        <begin position="414"/>
        <end position="417"/>
    </location>
</feature>
<feature type="strand" evidence="32">
    <location>
        <begin position="418"/>
        <end position="421"/>
    </location>
</feature>
<feature type="helix" evidence="32">
    <location>
        <begin position="423"/>
        <end position="425"/>
    </location>
</feature>
<feature type="turn" evidence="29">
    <location>
        <begin position="463"/>
        <end position="465"/>
    </location>
</feature>
<feature type="helix" evidence="29">
    <location>
        <begin position="466"/>
        <end position="468"/>
    </location>
</feature>
<feature type="strand" evidence="29">
    <location>
        <begin position="474"/>
        <end position="476"/>
    </location>
</feature>
<feature type="strand" evidence="29">
    <location>
        <begin position="480"/>
        <end position="484"/>
    </location>
</feature>
<feature type="helix" evidence="29">
    <location>
        <begin position="487"/>
        <end position="490"/>
    </location>
</feature>
<feature type="helix" evidence="29">
    <location>
        <begin position="492"/>
        <end position="494"/>
    </location>
</feature>
<organismHost>
    <name type="scientific">Homo sapiens</name>
    <name type="common">Human</name>
    <dbReference type="NCBI Taxonomy" id="9606"/>
</organismHost>
<evidence type="ECO:0000250" key="1"/>
<evidence type="ECO:0000250" key="2">
    <source>
        <dbReference type="UniProtKB" id="P03347"/>
    </source>
</evidence>
<evidence type="ECO:0000250" key="3">
    <source>
        <dbReference type="UniProtKB" id="P03348"/>
    </source>
</evidence>
<evidence type="ECO:0000250" key="4">
    <source>
        <dbReference type="UniProtKB" id="P03349"/>
    </source>
</evidence>
<evidence type="ECO:0000250" key="5">
    <source>
        <dbReference type="UniProtKB" id="P04591"/>
    </source>
</evidence>
<evidence type="ECO:0000255" key="6">
    <source>
        <dbReference type="PROSITE-ProRule" id="PRU00047"/>
    </source>
</evidence>
<evidence type="ECO:0000256" key="7">
    <source>
        <dbReference type="SAM" id="MobiDB-lite"/>
    </source>
</evidence>
<evidence type="ECO:0000269" key="8">
    <source>
    </source>
</evidence>
<evidence type="ECO:0000269" key="9">
    <source>
    </source>
</evidence>
<evidence type="ECO:0000269" key="10">
    <source>
    </source>
</evidence>
<evidence type="ECO:0000269" key="11">
    <source>
    </source>
</evidence>
<evidence type="ECO:0000269" key="12">
    <source>
    </source>
</evidence>
<evidence type="ECO:0000269" key="13">
    <source>
    </source>
</evidence>
<evidence type="ECO:0000269" key="14">
    <source>
    </source>
</evidence>
<evidence type="ECO:0000269" key="15">
    <source>
    </source>
</evidence>
<evidence type="ECO:0000269" key="16">
    <source>
    </source>
</evidence>
<evidence type="ECO:0000269" key="17">
    <source>
    </source>
</evidence>
<evidence type="ECO:0000269" key="18">
    <source>
    </source>
</evidence>
<evidence type="ECO:0000269" key="19">
    <source>
    </source>
</evidence>
<evidence type="ECO:0000269" key="20">
    <source>
    </source>
</evidence>
<evidence type="ECO:0000269" key="21">
    <source>
    </source>
</evidence>
<evidence type="ECO:0000269" key="22">
    <source>
    </source>
</evidence>
<evidence type="ECO:0000269" key="23">
    <source>
    </source>
</evidence>
<evidence type="ECO:0000269" key="24">
    <source>
    </source>
</evidence>
<evidence type="ECO:0000303" key="25">
    <source>
    </source>
</evidence>
<evidence type="ECO:0000305" key="26"/>
<evidence type="ECO:0007744" key="27">
    <source>
        <dbReference type="PDB" id="1GWP"/>
    </source>
</evidence>
<evidence type="ECO:0007744" key="28">
    <source>
        <dbReference type="PDB" id="2C55"/>
    </source>
</evidence>
<evidence type="ECO:0007829" key="29">
    <source>
        <dbReference type="PDB" id="2C55"/>
    </source>
</evidence>
<evidence type="ECO:0007829" key="30">
    <source>
        <dbReference type="PDB" id="4XFY"/>
    </source>
</evidence>
<evidence type="ECO:0007829" key="31">
    <source>
        <dbReference type="PDB" id="4XRQ"/>
    </source>
</evidence>
<evidence type="ECO:0007829" key="32">
    <source>
        <dbReference type="PDB" id="6RWG"/>
    </source>
</evidence>
<evidence type="ECO:0007829" key="33">
    <source>
        <dbReference type="PDB" id="6WAP"/>
    </source>
</evidence>
<evidence type="ECO:0007829" key="34">
    <source>
        <dbReference type="PDB" id="7JXR"/>
    </source>
</evidence>
<evidence type="ECO:0007829" key="35">
    <source>
        <dbReference type="PDB" id="7RAR"/>
    </source>
</evidence>
<evidence type="ECO:0007829" key="36">
    <source>
        <dbReference type="PDB" id="7TBP"/>
    </source>
</evidence>
<evidence type="ECO:0007829" key="37">
    <source>
        <dbReference type="PDB" id="7URT"/>
    </source>
</evidence>
<evidence type="ECO:0007829" key="38">
    <source>
        <dbReference type="PDB" id="8EEP"/>
    </source>
</evidence>
<evidence type="ECO:0007829" key="39">
    <source>
        <dbReference type="PDB" id="8QUB"/>
    </source>
</evidence>
<evidence type="ECO:0007829" key="40">
    <source>
        <dbReference type="PDB" id="8QUK"/>
    </source>
</evidence>
<comment type="function">
    <molecule>Gag polyprotein</molecule>
    <text evidence="5">Mediates, with Gag-Pol polyprotein, the essential events in virion assembly, including binding the plasma membrane, making the protein-protein interactions necessary to create spherical particles, recruiting the viral Env proteins, and packaging the genomic RNA via direct interactions with the RNA packaging sequence (Psi).</text>
</comment>
<comment type="function">
    <molecule>Matrix protein p17</molecule>
    <text evidence="1 12 18">Targets the polyprotein to the plasma membrane via a multipartite membrane-binding signal, that includes its myristoylated N-terminus (PubMed:16840558). Matrix protein is part of the pre-integration complex. Implicated in the release from host cell mediated by Vpu. Binds to RNA (PubMed:23552424).</text>
</comment>
<comment type="function">
    <molecule>Capsid protein p24</molecule>
    <text evidence="5 21">Forms the conical core that encapsulates the genomic RNA-nucleocapsid complex in the virion. Most core are conical, with only 7% tubular. The core is constituted by capsid protein hexamer subunits. The core is disassembled soon after virion entry (By similarity). The capsid promotes immune invasion by cloaking viral DNA from CGAS detection (By similarity). Host restriction factors such as TRIM5-alpha or TRIMCyp bind retroviral capsids and cause premature capsid disassembly, leading to blocks in reverse transcription. Capsid restriction by TRIM5 is one of the factors which restricts HIV-1 to the human species. Host PIN1 apparently facilitates the virion uncoating (PubMed:24509437). On the other hand, interactions with PDZD8 or CYPA stabilize the capsid.</text>
</comment>
<comment type="function">
    <molecule>Nucleocapsid protein p7</molecule>
    <text evidence="5">Encapsulates and protects viral dimeric unspliced genomic RNA (gRNA). Binds these RNAs through its zinc fingers. Acts as a nucleic acid chaperone which is involved in rearangement of nucleic acid secondary structure during gRNA retrotranscription. Also facilitates template switch leading to recombination. As part of the polyprotein, participates in gRNA dimerization, packaging, tRNA incorporation and virion assembly.</text>
</comment>
<comment type="function">
    <molecule>p6-gag</molecule>
    <text evidence="8 9 14">Plays a role in budding of the assembled particle by interacting with the host class E VPS proteins TSG101 and PDCD6IP/AIP1.</text>
</comment>
<comment type="subunit">
    <molecule>Gag polyprotein</molecule>
    <text evidence="4 5">Homotrimer; further assembles as hexamers of trimers (By similarity). Oligomerization possibly creates a central hole into which the cytoplasmic tail of the gp41 envelope protein may be inserted. Interacts with host TRIM22; this interaction seems to disrupt proper trafficking of Gag polyprotein and may interfere with budding (By similarity). Interacts with host PDZD8 (By similarity). When ubiquitinated, interacts (via p6-gag domain) with host PACSIN2; this interaction allows PACSIN2 recruitment to viral assembly sites and its subsequent incorporation into virions (By similarity). When ubiquitinated, interacts (via p6-gag domain) with host PACSIN2; this interaction allows PACSIN2 recruitment to viral assembly sites and its subsequent incorporation into virions. Interacts with MOV10 (By similarity).</text>
</comment>
<comment type="subunit">
    <molecule>Matrix protein p17</molecule>
    <text evidence="5 11 15 23">Homotrimer; further assembles as hexamers of trimers (By similarity). Interacts with gp41 (via C-terminus) (PubMed:8918455). Interacts with host CALM1; this interaction induces a conformational change in the Matrix protein, triggering exposure of the myristate group (PubMed:21799007). Interacts with host AP3D1; this interaction allows the polyprotein trafficking to multivesicular bodies during virus assembly (PubMed:15766529). Part of the pre-integration complex (PIC) which is composed of viral genome, matrix protein, Vpr and integrase (By similarity).</text>
</comment>
<comment type="subunit">
    <molecule>Capsid protein p24</molecule>
    <text evidence="5 17 19 20 22 24">Homodimer; the homodimer further multimerizes as homohexamers or homopentamers (PubMed:24066695). Interacts with host NUP98 (PubMed:23523133). Interacts with host PPIA/CYPA; this interaction stabilizes the capsid (PubMed:8980234). Interacts with host NUP153 (PubMed:23523133, PubMed:24130490, PubMed:29997211). Interacts with host PDZD8; this interaction stabilizes the capsid (By similarity). Interacts with host TRIM5; this interaction destabilizes the capsid (By similarity). Interacts with host CPSF6 (PubMed:24130490). Interacts with host NONO; the interaction is weak (By similarity).</text>
</comment>
<comment type="subunit">
    <molecule>Nucleocapsid protein p7</molecule>
    <text evidence="17">Interacts with host NUP98.</text>
</comment>
<comment type="subunit">
    <molecule>p6-gag</molecule>
    <text evidence="3 8 14">Interacts with Vpr; this interaction allows Vpr incorporation into the virion (By similarity). Interacts with host TSG101 (PubMed:11427703, PubMed:11595185). Interacts with host PDCD6IP/AIP1 (PubMed:19282983).</text>
</comment>
<comment type="subcellular location">
    <molecule>Gag polyprotein</molecule>
    <subcellularLocation>
        <location>Host cell membrane</location>
        <topology evidence="10">Lipid-anchor</topology>
    </subcellularLocation>
    <subcellularLocation>
        <location>Host endosome</location>
        <location>Host multivesicular body</location>
    </subcellularLocation>
    <text evidence="10">These locations are probably linked to virus assembly sites. The main location is the cell membrane, but under some circumstances, late endosomal compartments can serve as productive sites for virion assembly.</text>
</comment>
<comment type="subcellular location">
    <molecule>Matrix protein p17</molecule>
    <subcellularLocation>
        <location>Virion membrane</location>
        <topology evidence="26">Lipid-anchor</topology>
    </subcellularLocation>
    <subcellularLocation>
        <location evidence="1">Host nucleus</location>
    </subcellularLocation>
    <subcellularLocation>
        <location evidence="1">Host cytoplasm</location>
    </subcellularLocation>
</comment>
<comment type="subcellular location">
    <molecule>Capsid protein p24</molecule>
    <subcellularLocation>
        <location evidence="26">Virion</location>
    </subcellularLocation>
</comment>
<comment type="subcellular location">
    <molecule>Nucleocapsid protein p7</molecule>
    <subcellularLocation>
        <location evidence="26">Virion</location>
    </subcellularLocation>
</comment>
<comment type="alternative products">
    <event type="ribosomal frameshifting"/>
    <isoform>
        <id>P12493-1</id>
        <name>Gag polyprotein</name>
        <sequence type="displayed"/>
    </isoform>
    <isoform>
        <id>P12497-1</id>
        <name>Gag-Pol polyprotein</name>
        <sequence type="external"/>
    </isoform>
    <text>Translation results in the formation of the Gag polyprotein most of the time. Ribosomal frameshifting at the gag-pol genes boundary occurs at low frequency and produces the Gag-Pol polyprotein. This strategy of translation probably allows the virus to modulate the quantity of each viral protein. Maintenance of a correct Gag to Gag-Pol ratio is essential for RNA dimerization and viral infectivity.</text>
</comment>
<comment type="domain">
    <text evidence="14">Late-budding domains (L domains) are short sequence motifs essential for viral particle budding. They recruit proteins of the host ESCRT machinery (Endosomal Sorting Complex Required for Transport) or ESCRT-associated proteins. p6-gag contains two L domains: a PTAP/PSAP motif, which interacts with the UEV domain of TSG101 and a LYPX(n)L motif which interacts with PDCD6IP/AIP1.</text>
</comment>
<comment type="PTM">
    <text evidence="16">Gag-Pol polyprotein: Specific enzymatic cleavages by the viral protease yield mature proteins.</text>
</comment>
<comment type="PTM">
    <molecule>Matrix protein p17</molecule>
    <text evidence="5">Tyrosine phosphorylated presumably in the virion by a host kinase. Phosphorylation is apparently not a major regulator of membrane association.</text>
</comment>
<comment type="PTM">
    <molecule>Capsid protein p24</molecule>
    <text evidence="21">Phosphorylated possibly by host MAPK1; this phosphorylation is necessary for Pin1-mediated virion uncoating.</text>
</comment>
<comment type="PTM">
    <molecule>Nucleocapsid protein p7</molecule>
    <text evidence="2">Methylated by host PRMT6, impairing its function by reducing RNA annealing and the initiation of reverse transcription.</text>
</comment>
<comment type="miscellaneous">
    <text>The infectious clone pNL4-3 is a chimeric provirus that consists of DNA from HIV isolates NY5 (5' half) and BRU (3' half).</text>
</comment>
<comment type="miscellaneous">
    <text>HIV-1 lineages are divided in three main groups, M (for Major), O (for Outlier), and N (for New, or Non-M, Non-O). The vast majority of strains found worldwide belong to the group M. Group O seems to be endemic to and largely confined to Cameroon and neighboring countries in West Central Africa, where these viruses represent a small minority of HIV-1 strains. The group N is represented by a limited number of isolates from Cameroonian persons. The group M is further subdivided in 9 clades or subtypes (A to D, F to H, J and K).</text>
</comment>
<comment type="miscellaneous">
    <molecule>Isoform Gag polyprotein</molecule>
    <text>Produced by conventional translation.</text>
</comment>
<comment type="similarity">
    <text evidence="26">Belongs to the primate lentivirus group gag polyprotein family.</text>
</comment>
<reference key="1">
    <citation type="submission" date="1988-06" db="EMBL/GenBank/DDBJ databases">
        <authorList>
            <person name="Buckler C.E."/>
            <person name="Buckler-White A.J."/>
            <person name="Willey R.L."/>
            <person name="McCoy J."/>
        </authorList>
    </citation>
    <scope>NUCLEOTIDE SEQUENCE [GENOMIC RNA]</scope>
    <source>
        <strain>Clone pNL4-3</strain>
    </source>
</reference>
<reference key="2">
    <citation type="journal article" date="1996" name="EMBO J.">
        <title>Direct interaction between the envelope and matrix proteins of HIV-1.</title>
        <authorList>
            <person name="Cosson P."/>
        </authorList>
    </citation>
    <scope>INTERACTION OF MATRIX PROTEIN P17 WITH GP41</scope>
</reference>
<reference key="3">
    <citation type="journal article" date="1996" name="Cell">
        <title>Crystal structure of human cyclophilin A bound to the amino-terminal domain of HIV-1 capsid.</title>
        <authorList>
            <person name="Gamble T.R."/>
            <person name="Vajdos F.F."/>
            <person name="Yoo S."/>
            <person name="Worthylake D.K."/>
            <person name="Houseweart M."/>
            <person name="Sundquist W.I."/>
            <person name="Hill C.P."/>
        </authorList>
    </citation>
    <scope>INTERACTION OF CAPSID PROTEIN WITH HUMAN PPIA/CYPA</scope>
</reference>
<reference key="4">
    <citation type="journal article" date="2001" name="Proc. Natl. Acad. Sci. U.S.A.">
        <title>Tsg101, a homologue of ubiquitin-conjugating (E2) enzymes, binds the L domain in HIV type 1 Pr55(Gag).</title>
        <authorList>
            <person name="VerPlank L."/>
            <person name="Bouamr F."/>
            <person name="LaGrassa T.J."/>
            <person name="Agresta B."/>
            <person name="Kikonyogo A."/>
            <person name="Leis J."/>
            <person name="Carter C.A."/>
        </authorList>
    </citation>
    <scope>INTERACTION OF P6-GAG WITH HUMAN TSG101</scope>
    <scope>FUNCTION (P6-GAG)</scope>
</reference>
<reference key="5">
    <citation type="journal article" date="2001" name="Cell">
        <title>Tsg101 and the vacuolar protein sorting pathway are essential for HIV-1 budding.</title>
        <authorList>
            <person name="Garrus J.E."/>
            <person name="von Schwedler U.K."/>
            <person name="Pornillos O.W."/>
            <person name="Morham S.G."/>
            <person name="Zavitz K.H."/>
            <person name="Wang H.E."/>
            <person name="Wettstein D.A."/>
            <person name="Stray K.M."/>
            <person name="Cote M."/>
            <person name="Rich R.L."/>
            <person name="Myszka D.G."/>
            <person name="Sundquist W.I."/>
        </authorList>
    </citation>
    <scope>INTERACTION OF P6-GAG WITH HUMAN TSG101</scope>
    <scope>FUNCTION (P6-GAG)</scope>
</reference>
<reference key="6">
    <citation type="journal article" date="2004" name="J. Virol.">
        <title>Cell-type-dependent targeting of human immunodeficiency virus type 1 assembly to the plasma membrane and the multivesicular body.</title>
        <authorList>
            <person name="Ono A."/>
            <person name="Freed E.O."/>
        </authorList>
    </citation>
    <scope>SUBCELLULAR LOCATION OF GAG POLYPROTEIN</scope>
</reference>
<reference key="7">
    <citation type="journal article" date="2005" name="Cell">
        <title>AP-3 directs the intracellular trafficking of HIV-1 Gag and plays a key role in particle assembly.</title>
        <authorList>
            <person name="Dong X."/>
            <person name="Li H."/>
            <person name="Derdowski A."/>
            <person name="Ding L."/>
            <person name="Burnett A."/>
            <person name="Chen X."/>
            <person name="Peters T.R."/>
            <person name="Dermody T.S."/>
            <person name="Woodruff E."/>
            <person name="Wang J.J."/>
            <person name="Spearman P."/>
        </authorList>
    </citation>
    <scope>INTERACTION OF MATRIX PROTEIN P17 WITH HUMAN AP3D1</scope>
</reference>
<reference key="8">
    <citation type="journal article" date="2006" name="Proc. Natl. Acad. Sci. U.S.A.">
        <title>Structural basis for targeting HIV-1 Gag proteins to the plasma membrane for virus assembly.</title>
        <authorList>
            <person name="Saad J.S."/>
            <person name="Miller J."/>
            <person name="Tai J."/>
            <person name="Kim A."/>
            <person name="Ghanam R.H."/>
            <person name="Summers M.F."/>
        </authorList>
    </citation>
    <scope>INTERACTION OF MATRIX PROTEIN P17 WITH PHOSPHATIDYLINOSITOL 4,5-BISPHOSPHATE</scope>
    <scope>FUNCTION (MATRIX PROTEIN P17)</scope>
</reference>
<reference key="9">
    <citation type="journal article" date="2009" name="Virology">
        <title>Mutation of critical serine residues in HIV-1 matrix result in an envelope incorporation defect which can be rescued by truncation of the gp41 cytoplasmic tail.</title>
        <authorList>
            <person name="Bhatia A.K."/>
            <person name="Kaushik R."/>
            <person name="Campbell N.A."/>
            <person name="Pontow S.E."/>
            <person name="Ratner L."/>
        </authorList>
    </citation>
    <scope>MUTAGENESIS OF SER-9; SER-67; SER-72 AND SER-77</scope>
</reference>
<reference key="10">
    <citation type="journal article" date="2009" name="PLoS Pathog.">
        <title>The nucleocapsid region of HIV-1 Gag cooperates with the PTAP and LYPXnL late domains to recruit the cellular machinery necessary for viral budding.</title>
        <authorList>
            <person name="Dussupt V."/>
            <person name="Javid M.P."/>
            <person name="Abou-Jaoude G."/>
            <person name="Jadwin J.A."/>
            <person name="de La Cruz J."/>
            <person name="Nagashima K."/>
            <person name="Bouamr F."/>
        </authorList>
    </citation>
    <scope>LATE-BUDDING DOMAINS</scope>
    <scope>INTERACTION OF P6-GAG WITH HOST TSG101</scope>
    <scope>INTERACTION OF P6-GAG WITH HOST PDCD6IP/AIP1</scope>
    <scope>FUNCTION (P6-GAG)</scope>
</reference>
<reference key="11">
    <citation type="journal article" date="2011" name="J. Biol. Chem.">
        <title>NMR, biophysical, and biochemical studies reveal the minimal Calmodulin binding domain of the HIV-1 matrix protein.</title>
        <authorList>
            <person name="Samal A.B."/>
            <person name="Ghanam R.H."/>
            <person name="Fernandez T.F."/>
            <person name="Monroe E.B."/>
            <person name="Saad J.S."/>
        </authorList>
    </citation>
    <scope>INTERACTION OF MATRIX PROTEIN P17 WITH RAT CALM1</scope>
</reference>
<reference key="12">
    <citation type="journal article" date="2012" name="J. Biol. Chem.">
        <title>Context surrounding processing sites is crucial in determining cleavage rate of a subset of processing sites in HIV-1 Gag and Gag-Pro-Pol polyprotein precursors by viral protease.</title>
        <authorList>
            <person name="Lee S.K."/>
            <person name="Potempa M."/>
            <person name="Kolli M."/>
            <person name="Ozen A."/>
            <person name="Schiffer C.A."/>
            <person name="Swanstrom R."/>
        </authorList>
    </citation>
    <scope>PROTEOLYTIC PROCESSING OF GAG POLYPROTEIN</scope>
</reference>
<reference key="13">
    <citation type="journal article" date="2013" name="PLoS Pathog.">
        <title>Nucleoporin NUP153 phenylalanine-glycine motifs engage a common binding pocket within the HIV-1 capsid protein to mediate lentiviral infectivity.</title>
        <authorList>
            <person name="Matreyek K.A."/>
            <person name="Yucel S.S."/>
            <person name="Li X."/>
            <person name="Engelman A."/>
        </authorList>
    </citation>
    <scope>INTERACTION OF CAPSID WITH HUMAN NUP153 AND HUMAN CPSF6</scope>
    <scope>MUTAGENESIS OF ASN-189 AND ASN-206</scope>
    <source>
        <strain>Clone pNL4-3</strain>
    </source>
</reference>
<reference key="14">
    <citation type="journal article" date="2013" name="Virology">
        <title>Nup153 and Nup98 bind the HIV-1 core and contribute to the early steps of HIV-1 replication.</title>
        <authorList>
            <person name="Di Nunzio F."/>
            <person name="Fricke T."/>
            <person name="Miccio A."/>
            <person name="Valle-Casuso J.C."/>
            <person name="Perez P."/>
            <person name="Souque P."/>
            <person name="Rizzi E."/>
            <person name="Severgnini M."/>
            <person name="Mavilio F."/>
            <person name="Charneau P."/>
            <person name="Diaz-Griffero F."/>
        </authorList>
    </citation>
    <scope>INTERACTION OF CAPSID WITH HUMAN NUP153 AND HUMAN NUP98</scope>
    <scope>MUTAGENESIS OF ASN-206</scope>
</reference>
<reference key="15">
    <citation type="journal article" date="2013" name="J. Am. Chem. Soc.">
        <title>Structure and dynamics of full-length HIV-1 capsid protein in solution.</title>
        <authorList>
            <person name="Deshmukh L."/>
            <person name="Schwieters C.D."/>
            <person name="Grishaev A."/>
            <person name="Ghirlando R."/>
            <person name="Baber J.L."/>
            <person name="Clore G.M."/>
        </authorList>
    </citation>
    <scope>SUBUNIT (CAPSID PROTEIN P24)</scope>
</reference>
<reference key="16">
    <citation type="journal article" date="2013" name="J. Virol.">
        <title>Evidence in support of RNA-mediated inhibition of phosphatidylserine-dependent HIV-1 Gag membrane binding in cells.</title>
        <authorList>
            <person name="Chukkapalli V."/>
            <person name="Inlora J."/>
            <person name="Todd G.C."/>
            <person name="Ono A."/>
        </authorList>
    </citation>
    <scope>INTERACTION OF MATRIX PROTEIN P17 WITH RNA</scope>
    <scope>FUNCTION (MATRIX PROTEIN P17)</scope>
</reference>
<reference key="17">
    <citation type="journal article" date="2014" name="J. Gen. Virol.">
        <title>Phosphorylation of human immunodeficiency virus type 1 capsid protein at serine 16, required for peptidyl-prolyl isomerase-dependent uncoating, is mediated by virion-incorporated extracellular signal-regulated kinase 2.</title>
        <authorList>
            <person name="Dochi T."/>
            <person name="Nakano T."/>
            <person name="Inoue M."/>
            <person name="Takamune N."/>
            <person name="Shoji S."/>
            <person name="Sano K."/>
            <person name="Misumi S."/>
        </authorList>
    </citation>
    <scope>PHOSPHORYLATION AT SER-148 (CAPSID PROTEIN P24)</scope>
    <scope>FUNCTION (CAPSID PROTEIN P24)</scope>
</reference>
<reference key="18">
    <citation type="journal article" date="2003" name="Biochim. Biophys. Acta">
        <title>Role of HIV-1 Gag domains in viral assembly.</title>
        <authorList>
            <person name="Scarlata S."/>
            <person name="Carter C."/>
        </authorList>
    </citation>
    <scope>REVIEW</scope>
</reference>
<reference evidence="27" key="19">
    <citation type="journal article" date="2002" name="Nat. Struct. Biol.">
        <title>Structure of the N-terminal 283-residue fragment of the immature HIV-1 Gag polyprotein.</title>
        <authorList>
            <person name="Tang C."/>
            <person name="Ndassa Y."/>
            <person name="Summers M.F."/>
        </authorList>
    </citation>
    <scope>STRUCTURE BY NMR OF 133-283</scope>
</reference>
<reference evidence="28" key="20">
    <citation type="journal article" date="2005" name="J. Biol. Chem.">
        <title>Solution structure of the human immunodeficiency virus type 1 p6 protein.</title>
        <authorList>
            <person name="Fossen T."/>
            <person name="Wray V."/>
            <person name="Bruns K."/>
            <person name="Rachmat J."/>
            <person name="Henklein P."/>
            <person name="Tessmer U."/>
            <person name="Maczurek A."/>
            <person name="Klinger P."/>
            <person name="Schubert U."/>
        </authorList>
    </citation>
    <scope>STRUCTURE BY NMR OF 449-500</scope>
</reference>
<reference key="21">
    <citation type="journal article" date="2018" name="J. Virol.">
        <title>Nup153 Unlocks the Nuclear Pore Complex for HIV-1 Nuclear Translocation in Nondividing Cells.</title>
        <authorList>
            <person name="Buffone C."/>
            <person name="Martinez-Lopez A."/>
            <person name="Fricke T."/>
            <person name="Opp S."/>
            <person name="Severgnini M."/>
            <person name="Cifola I."/>
            <person name="Petiti L."/>
            <person name="Frabetti S."/>
            <person name="Skorupka K."/>
            <person name="Zadrozny K.K."/>
            <person name="Ganser-Pornillos B.K."/>
            <person name="Pornillos O."/>
            <person name="Di Nunzio F."/>
            <person name="Diaz-Griffero F."/>
        </authorList>
    </citation>
    <scope>X-RAY CRYSTALLOGRAPHY (1.90 ANGSTROMS) OF 133-363</scope>
    <scope>INTERACTION WITH HUMAN NUP153</scope>
    <scope>MUTAGENESIS OF PRO-166; ILE-169; PRO-170; ASN-185; LEU-188; ASN-189; VAL-191; ASN-206; VAL-274; ARG-305 AND GLN-308</scope>
</reference>
<accession>P12493</accession>
<keyword id="KW-0002">3D-structure</keyword>
<keyword id="KW-0014">AIDS</keyword>
<keyword id="KW-0167">Capsid protein</keyword>
<keyword id="KW-1032">Host cell membrane</keyword>
<keyword id="KW-1035">Host cytoplasm</keyword>
<keyword id="KW-1039">Host endosome</keyword>
<keyword id="KW-1043">Host membrane</keyword>
<keyword id="KW-1048">Host nucleus</keyword>
<keyword id="KW-0945">Host-virus interaction</keyword>
<keyword id="KW-0449">Lipoprotein</keyword>
<keyword id="KW-0472">Membrane</keyword>
<keyword id="KW-0479">Metal-binding</keyword>
<keyword id="KW-0488">Methylation</keyword>
<keyword id="KW-0519">Myristate</keyword>
<keyword id="KW-0597">Phosphoprotein</keyword>
<keyword id="KW-0677">Repeat</keyword>
<keyword id="KW-0688">Ribosomal frameshifting</keyword>
<keyword id="KW-0694">RNA-binding</keyword>
<keyword id="KW-1198">Viral budding</keyword>
<keyword id="KW-1187">Viral budding via the host ESCRT complexes</keyword>
<keyword id="KW-0543">Viral nucleoprotein</keyword>
<keyword id="KW-1188">Viral release from host cell</keyword>
<keyword id="KW-0946">Virion</keyword>
<keyword id="KW-0862">Zinc</keyword>
<keyword id="KW-0863">Zinc-finger</keyword>
<name>GAG_HV1N5</name>
<dbReference type="EMBL" id="M19921">
    <property type="protein sequence ID" value="AAA44987.1"/>
    <property type="molecule type" value="Genomic_RNA"/>
</dbReference>
<dbReference type="PDB" id="1GWP">
    <property type="method" value="NMR"/>
    <property type="chains" value="A=133-283"/>
</dbReference>
<dbReference type="PDB" id="2C55">
    <property type="method" value="NMR"/>
    <property type="chains" value="A=449-500"/>
</dbReference>
<dbReference type="PDB" id="2MGU">
    <property type="method" value="NMR"/>
    <property type="chains" value="M=8-43"/>
</dbReference>
<dbReference type="PDB" id="3GV2">
    <property type="method" value="X-ray"/>
    <property type="resolution" value="7.00 A"/>
    <property type="chains" value="A/B/C/D/E/F=133-351"/>
</dbReference>
<dbReference type="PDB" id="4U0A">
    <property type="method" value="X-ray"/>
    <property type="resolution" value="2.05 A"/>
    <property type="chains" value="A=133-363"/>
</dbReference>
<dbReference type="PDB" id="4U0B">
    <property type="method" value="X-ray"/>
    <property type="resolution" value="2.80 A"/>
    <property type="chains" value="A/B/C/D/E/F/G/H/I/J/K/L=133-363"/>
</dbReference>
<dbReference type="PDB" id="4U0C">
    <property type="method" value="X-ray"/>
    <property type="resolution" value="1.77 A"/>
    <property type="chains" value="A=133-363"/>
</dbReference>
<dbReference type="PDB" id="4U0D">
    <property type="method" value="X-ray"/>
    <property type="resolution" value="3.00 A"/>
    <property type="chains" value="A/B/C/D/E/F/G/H/I/J/K/L=133-363"/>
</dbReference>
<dbReference type="PDB" id="4U0E">
    <property type="method" value="X-ray"/>
    <property type="resolution" value="2.04 A"/>
    <property type="chains" value="A=133-363"/>
</dbReference>
<dbReference type="PDB" id="4U0F">
    <property type="method" value="X-ray"/>
    <property type="resolution" value="2.22 A"/>
    <property type="chains" value="A=133-363"/>
</dbReference>
<dbReference type="PDB" id="4XFX">
    <property type="method" value="X-ray"/>
    <property type="resolution" value="2.43 A"/>
    <property type="chains" value="A=133-363"/>
</dbReference>
<dbReference type="PDB" id="4XFY">
    <property type="method" value="X-ray"/>
    <property type="resolution" value="2.80 A"/>
    <property type="chains" value="A=133-363"/>
</dbReference>
<dbReference type="PDB" id="4XFZ">
    <property type="method" value="X-ray"/>
    <property type="resolution" value="2.70 A"/>
    <property type="chains" value="A=133-363"/>
</dbReference>
<dbReference type="PDB" id="4XRO">
    <property type="method" value="X-ray"/>
    <property type="resolution" value="2.01 A"/>
    <property type="chains" value="A=133-363"/>
</dbReference>
<dbReference type="PDB" id="4XRQ">
    <property type="method" value="X-ray"/>
    <property type="resolution" value="1.95 A"/>
    <property type="chains" value="A=133-363"/>
</dbReference>
<dbReference type="PDB" id="5HGL">
    <property type="method" value="X-ray"/>
    <property type="resolution" value="3.10 A"/>
    <property type="chains" value="A/B/C/D/E/F=133-363"/>
</dbReference>
<dbReference type="PDB" id="5HGM">
    <property type="method" value="X-ray"/>
    <property type="resolution" value="2.04 A"/>
    <property type="chains" value="A=133-363"/>
</dbReference>
<dbReference type="PDB" id="5HGN">
    <property type="method" value="X-ray"/>
    <property type="resolution" value="1.90 A"/>
    <property type="chains" value="A=133-363"/>
</dbReference>
<dbReference type="PDB" id="5HGO">
    <property type="method" value="X-ray"/>
    <property type="resolution" value="2.00 A"/>
    <property type="chains" value="A=133-363"/>
</dbReference>
<dbReference type="PDB" id="5HGP">
    <property type="method" value="X-ray"/>
    <property type="resolution" value="1.95 A"/>
    <property type="chains" value="A=133-363"/>
</dbReference>
<dbReference type="PDB" id="5IRT">
    <property type="method" value="NMR"/>
    <property type="chains" value="A/B=133-363"/>
</dbReference>
<dbReference type="PDB" id="5JPA">
    <property type="method" value="X-ray"/>
    <property type="resolution" value="1.70 A"/>
    <property type="chains" value="A=133-363"/>
</dbReference>
<dbReference type="PDB" id="5L93">
    <property type="method" value="EM"/>
    <property type="resolution" value="3.90 A"/>
    <property type="chains" value="A/B/C=148-371"/>
</dbReference>
<dbReference type="PDB" id="5O2U">
    <property type="method" value="X-ray"/>
    <property type="resolution" value="2.76 A"/>
    <property type="chains" value="A/C=1-500"/>
</dbReference>
<dbReference type="PDB" id="5TSV">
    <property type="method" value="X-ray"/>
    <property type="resolution" value="2.50 A"/>
    <property type="chains" value="A/B=133-363"/>
</dbReference>
<dbReference type="PDB" id="5TSX">
    <property type="method" value="X-ray"/>
    <property type="resolution" value="1.90 A"/>
    <property type="chains" value="A/B/C/D/E/F/G/H/I/J/K/L=133-363"/>
</dbReference>
<dbReference type="PDB" id="5UPW">
    <property type="method" value="EM"/>
    <property type="resolution" value="5.00 A"/>
    <property type="chains" value="A/B/C/D/E/F=133-353"/>
</dbReference>
<dbReference type="PDB" id="5W4O">
    <property type="method" value="X-ray"/>
    <property type="resolution" value="2.09 A"/>
    <property type="chains" value="A=133-363"/>
</dbReference>
<dbReference type="PDB" id="5W4P">
    <property type="method" value="X-ray"/>
    <property type="resolution" value="2.19 A"/>
    <property type="chains" value="A=133-363"/>
</dbReference>
<dbReference type="PDB" id="5W4Q">
    <property type="method" value="X-ray"/>
    <property type="resolution" value="2.29 A"/>
    <property type="chains" value="A=133-363"/>
</dbReference>
<dbReference type="PDB" id="6AXR">
    <property type="method" value="X-ray"/>
    <property type="resolution" value="2.30 A"/>
    <property type="chains" value="A=133-363"/>
</dbReference>
<dbReference type="PDB" id="6AXS">
    <property type="method" value="X-ray"/>
    <property type="resolution" value="2.40 A"/>
    <property type="chains" value="A=133-363"/>
</dbReference>
<dbReference type="PDB" id="6AXT">
    <property type="method" value="X-ray"/>
    <property type="resolution" value="2.40 A"/>
    <property type="chains" value="A=133-363"/>
</dbReference>
<dbReference type="PDB" id="6AXV">
    <property type="method" value="X-ray"/>
    <property type="resolution" value="2.77 A"/>
    <property type="chains" value="A=133-363"/>
</dbReference>
<dbReference type="PDB" id="6AXW">
    <property type="method" value="X-ray"/>
    <property type="resolution" value="2.40 A"/>
    <property type="chains" value="A=133-362"/>
</dbReference>
<dbReference type="PDB" id="6AXX">
    <property type="method" value="X-ray"/>
    <property type="resolution" value="2.60 A"/>
    <property type="chains" value="A=133-363"/>
</dbReference>
<dbReference type="PDB" id="6AXY">
    <property type="method" value="X-ray"/>
    <property type="resolution" value="2.78 A"/>
    <property type="chains" value="A=133-363"/>
</dbReference>
<dbReference type="PDB" id="6AY9">
    <property type="method" value="X-ray"/>
    <property type="resolution" value="2.50 A"/>
    <property type="chains" value="A=133-363"/>
</dbReference>
<dbReference type="PDB" id="6AYA">
    <property type="method" value="X-ray"/>
    <property type="resolution" value="2.40 A"/>
    <property type="chains" value="A=133-363"/>
</dbReference>
<dbReference type="PDB" id="6B2G">
    <property type="method" value="X-ray"/>
    <property type="resolution" value="2.41 A"/>
    <property type="chains" value="A=133-363"/>
</dbReference>
<dbReference type="PDB" id="6B2H">
    <property type="method" value="X-ray"/>
    <property type="resolution" value="2.60 A"/>
    <property type="chains" value="A=133-363"/>
</dbReference>
<dbReference type="PDB" id="6B2I">
    <property type="method" value="X-ray"/>
    <property type="resolution" value="2.50 A"/>
    <property type="chains" value="A=133-363"/>
</dbReference>
<dbReference type="PDB" id="6B2J">
    <property type="method" value="X-ray"/>
    <property type="resolution" value="2.21 A"/>
    <property type="chains" value="A=133-363"/>
</dbReference>
<dbReference type="PDB" id="6B2K">
    <property type="method" value="X-ray"/>
    <property type="resolution" value="2.00 A"/>
    <property type="chains" value="A=133-363"/>
</dbReference>
<dbReference type="PDB" id="6BHS">
    <property type="method" value="X-ray"/>
    <property type="resolution" value="1.98 A"/>
    <property type="chains" value="A=133-363"/>
</dbReference>
<dbReference type="PDB" id="6BHT">
    <property type="method" value="X-ray"/>
    <property type="resolution" value="2.69 A"/>
    <property type="chains" value="A/B/C/D/E/F/G/H/I/J/K/L=133-363"/>
</dbReference>
<dbReference type="PDB" id="6ECN">
    <property type="method" value="X-ray"/>
    <property type="resolution" value="3.40 A"/>
    <property type="chains" value="A/B/D/E=133-363, C/F=133-278"/>
</dbReference>
<dbReference type="PDB" id="6H09">
    <property type="method" value="X-ray"/>
    <property type="resolution" value="2.00 A"/>
    <property type="chains" value="A=133-351"/>
</dbReference>
<dbReference type="PDB" id="6MQA">
    <property type="method" value="X-ray"/>
    <property type="resolution" value="3.20 A"/>
    <property type="chains" value="A=132-363"/>
</dbReference>
<dbReference type="PDB" id="6MQO">
    <property type="method" value="X-ray"/>
    <property type="resolution" value="3.20 A"/>
    <property type="chains" value="A=132-363"/>
</dbReference>
<dbReference type="PDB" id="6MQP">
    <property type="method" value="X-ray"/>
    <property type="resolution" value="3.30 A"/>
    <property type="chains" value="A=132-363"/>
</dbReference>
<dbReference type="PDB" id="6OBH">
    <property type="method" value="X-ray"/>
    <property type="resolution" value="2.96 A"/>
    <property type="chains" value="A/B/C/D/E/F=132-363"/>
</dbReference>
<dbReference type="PDB" id="6OMT">
    <property type="method" value="X-ray"/>
    <property type="resolution" value="2.05 A"/>
    <property type="chains" value="A=132-363"/>
</dbReference>
<dbReference type="PDB" id="6PU1">
    <property type="method" value="X-ray"/>
    <property type="resolution" value="2.28 A"/>
    <property type="chains" value="A=133-363"/>
</dbReference>
<dbReference type="PDB" id="6R6Q">
    <property type="method" value="X-ray"/>
    <property type="resolution" value="2.73 A"/>
    <property type="chains" value="A=133-351"/>
</dbReference>
<dbReference type="PDB" id="6RWG">
    <property type="method" value="NMR"/>
    <property type="chains" value="A=276-432"/>
</dbReference>
<dbReference type="PDB" id="6V2F">
    <property type="method" value="X-ray"/>
    <property type="resolution" value="2.00 A"/>
    <property type="chains" value="A/B/C/D/E/F=132-363"/>
</dbReference>
<dbReference type="PDB" id="6VKV">
    <property type="method" value="X-ray"/>
    <property type="resolution" value="2.22 A"/>
    <property type="chains" value="A/B/C=133-363"/>
</dbReference>
<dbReference type="PDB" id="6VWS">
    <property type="method" value="EM"/>
    <property type="resolution" value="6.08 A"/>
    <property type="chains" value="A/B/C/D/M/N=133-352"/>
</dbReference>
<dbReference type="PDB" id="6WAP">
    <property type="method" value="NMR"/>
    <property type="chains" value="A=133-363"/>
</dbReference>
<dbReference type="PDB" id="6X63">
    <property type="method" value="NMR"/>
    <property type="chains" value="0/0A/0B/0C/0D/0E/1/1A/1B/1C/1D/1E/2/2A/2B/2C/2D/2E/3/3A/3B/3C/3D/3E/4/4A/4B/4C/4D/4E=133-363"/>
</dbReference>
<dbReference type="PDB" id="7E1J">
    <property type="method" value="X-ray"/>
    <property type="resolution" value="2.72 A"/>
    <property type="chains" value="A/B/C/D/E/F=1-116"/>
</dbReference>
<dbReference type="PDB" id="7JXR">
    <property type="method" value="X-ray"/>
    <property type="resolution" value="2.04 A"/>
    <property type="chains" value="A/B/C/D/E/F=2-132"/>
</dbReference>
<dbReference type="PDB" id="7JXS">
    <property type="method" value="X-ray"/>
    <property type="resolution" value="2.35 A"/>
    <property type="chains" value="A/B/C/D/E/F=2-132"/>
</dbReference>
<dbReference type="PDB" id="7M9F">
    <property type="method" value="X-ray"/>
    <property type="resolution" value="2.70 A"/>
    <property type="chains" value="A=133-363"/>
</dbReference>
<dbReference type="PDB" id="7MKC">
    <property type="method" value="X-ray"/>
    <property type="resolution" value="2.65 A"/>
    <property type="chains" value="A=133-363"/>
</dbReference>
<dbReference type="PDB" id="7MN0">
    <property type="method" value="X-ray"/>
    <property type="resolution" value="2.90 A"/>
    <property type="chains" value="A=133-363"/>
</dbReference>
<dbReference type="PDB" id="7N9U">
    <property type="method" value="X-ray"/>
    <property type="resolution" value="3.19 A"/>
    <property type="chains" value="A/B/C=133-354"/>
</dbReference>
<dbReference type="PDB" id="7N9V">
    <property type="method" value="X-ray"/>
    <property type="resolution" value="3.45 A"/>
    <property type="chains" value="A/C/D/G/I/K=133-354"/>
</dbReference>
<dbReference type="PDB" id="7OVQ">
    <property type="method" value="EM"/>
    <property type="resolution" value="7.20 A"/>
    <property type="chains" value="A/B/C/D/E/F/I/K/M/O/P/Q/R/S/X/Y/Z/b/c/d/f/h/l/m=2-116"/>
</dbReference>
<dbReference type="PDB" id="7OVR">
    <property type="method" value="EM"/>
    <property type="resolution" value="7.00 A"/>
    <property type="chains" value="A/B/C/D/E/F/H/I/J/O/P/Q/R/S/U/W/Y/b/c/d/e/f/j/l=2-116"/>
</dbReference>
<dbReference type="PDB" id="7P3O">
    <property type="method" value="NMR"/>
    <property type="chains" value="A=449-500"/>
</dbReference>
<dbReference type="PDB" id="7QDF">
    <property type="method" value="X-ray"/>
    <property type="resolution" value="2.30 A"/>
    <property type="chains" value="AAA=133-363"/>
</dbReference>
<dbReference type="PDB" id="7R7P">
    <property type="method" value="NMR"/>
    <property type="chains" value="G/H/I/J/K/L=278-377"/>
</dbReference>
<dbReference type="PDB" id="7R7Q">
    <property type="method" value="NMR"/>
    <property type="chains" value="G/H/I/J/K/L=278-377"/>
</dbReference>
<dbReference type="PDB" id="7RAO">
    <property type="method" value="X-ray"/>
    <property type="resolution" value="2.29 A"/>
    <property type="chains" value="A/B/C=133-363"/>
</dbReference>
<dbReference type="PDB" id="7RAR">
    <property type="method" value="X-ray"/>
    <property type="resolution" value="2.15 A"/>
    <property type="chains" value="C=133-363"/>
</dbReference>
<dbReference type="PDB" id="7RHM">
    <property type="method" value="X-ray"/>
    <property type="resolution" value="2.16 A"/>
    <property type="chains" value="C=133-363"/>
</dbReference>
<dbReference type="PDB" id="7RHN">
    <property type="method" value="X-ray"/>
    <property type="resolution" value="2.46 A"/>
    <property type="chains" value="C=133-363"/>
</dbReference>
<dbReference type="PDB" id="7RJ2">
    <property type="method" value="X-ray"/>
    <property type="resolution" value="2.32 A"/>
    <property type="chains" value="C=133-363"/>
</dbReference>
<dbReference type="PDB" id="7RJ4">
    <property type="method" value="X-ray"/>
    <property type="resolution" value="3.32 A"/>
    <property type="chains" value="A/B/C=133-363"/>
</dbReference>
<dbReference type="PDB" id="7T13">
    <property type="method" value="X-ray"/>
    <property type="resolution" value="3.15 A"/>
    <property type="chains" value="A/B/C/D/E/F=133-363"/>
</dbReference>
<dbReference type="PDB" id="7TBP">
    <property type="method" value="X-ray"/>
    <property type="resolution" value="2.15 A"/>
    <property type="chains" value="A/B/C=2-112"/>
</dbReference>
<dbReference type="PDB" id="7URN">
    <property type="method" value="EM"/>
    <property type="resolution" value="3.43 A"/>
    <property type="chains" value="A/L/M/N/O/P/Q=133-363"/>
</dbReference>
<dbReference type="PDB" id="7URT">
    <property type="method" value="EM"/>
    <property type="resolution" value="2.39 A"/>
    <property type="chains" value="A=133-363"/>
</dbReference>
<dbReference type="PDB" id="8CKV">
    <property type="method" value="EM"/>
    <property type="resolution" value="2.89 A"/>
    <property type="chains" value="A=132-363"/>
</dbReference>
<dbReference type="PDB" id="8CKW">
    <property type="method" value="EM"/>
    <property type="resolution" value="3.12 A"/>
    <property type="chains" value="A/B/C=132-363"/>
</dbReference>
<dbReference type="PDB" id="8CKX">
    <property type="method" value="EM"/>
    <property type="resolution" value="2.97 A"/>
    <property type="chains" value="A/B/C/D/E/F=132-363"/>
</dbReference>
<dbReference type="PDB" id="8CKY">
    <property type="method" value="EM"/>
    <property type="resolution" value="2.60 A"/>
    <property type="chains" value="A=132-363"/>
</dbReference>
<dbReference type="PDB" id="8CKZ">
    <property type="method" value="EM"/>
    <property type="resolution" value="3.07 A"/>
    <property type="chains" value="A/B/C=132-363"/>
</dbReference>
<dbReference type="PDB" id="8CL0">
    <property type="method" value="EM"/>
    <property type="resolution" value="3.12 A"/>
    <property type="chains" value="A/B/C/D/E/F=132-363"/>
</dbReference>
<dbReference type="PDB" id="8CL1">
    <property type="method" value="EM"/>
    <property type="resolution" value="3.35 A"/>
    <property type="chains" value="A=132-363"/>
</dbReference>
<dbReference type="PDB" id="8CL2">
    <property type="method" value="EM"/>
    <property type="resolution" value="3.45 A"/>
    <property type="chains" value="A/B/C=132-363"/>
</dbReference>
<dbReference type="PDB" id="8CL3">
    <property type="method" value="EM"/>
    <property type="resolution" value="3.14 A"/>
    <property type="chains" value="A=132-363"/>
</dbReference>
<dbReference type="PDB" id="8CL4">
    <property type="method" value="EM"/>
    <property type="resolution" value="3.14 A"/>
    <property type="chains" value="A/B/C=132-363"/>
</dbReference>
<dbReference type="PDB" id="8EEP">
    <property type="method" value="EM"/>
    <property type="resolution" value="2.20 A"/>
    <property type="chains" value="A=133-363"/>
</dbReference>
<dbReference type="PDB" id="8EET">
    <property type="method" value="EM"/>
    <property type="resolution" value="3.10 A"/>
    <property type="chains" value="A=133-363"/>
</dbReference>
<dbReference type="PDB" id="8EJL">
    <property type="method" value="EM"/>
    <property type="resolution" value="3.90 A"/>
    <property type="chains" value="A/L/M/N=133-363"/>
</dbReference>
<dbReference type="PDB" id="8FIU">
    <property type="method" value="X-ray"/>
    <property type="resolution" value="1.56 A"/>
    <property type="chains" value="A/B/C=132-363"/>
</dbReference>
<dbReference type="PDB" id="8G6K">
    <property type="method" value="EM"/>
    <property type="resolution" value="3.60 A"/>
    <property type="chains" value="A/B/C/D/E/F/G=132-363"/>
</dbReference>
<dbReference type="PDB" id="8G6L">
    <property type="method" value="EM"/>
    <property type="resolution" value="3.30 A"/>
    <property type="chains" value="A/B/C/D/E/F/G=132-363"/>
</dbReference>
<dbReference type="PDB" id="8G6M">
    <property type="method" value="EM"/>
    <property type="resolution" value="3.10 A"/>
    <property type="chains" value="A/B/C/D/E/F/G=132-363"/>
</dbReference>
<dbReference type="PDB" id="8G6N">
    <property type="method" value="EM"/>
    <property type="resolution" value="3.50 A"/>
    <property type="chains" value="A/B/C/D/E/F/G=132-363"/>
</dbReference>
<dbReference type="PDB" id="8G6O">
    <property type="method" value="EM"/>
    <property type="resolution" value="3.10 A"/>
    <property type="chains" value="A/B/C/D/E=132-363"/>
</dbReference>
<dbReference type="PDB" id="8GDV">
    <property type="method" value="X-ray"/>
    <property type="resolution" value="3.30 A"/>
    <property type="chains" value="A/B/C/D/E/F=133-363"/>
</dbReference>
<dbReference type="PDB" id="8QUB">
    <property type="method" value="X-ray"/>
    <property type="resolution" value="1.63 A"/>
    <property type="chains" value="A=133-363"/>
</dbReference>
<dbReference type="PDB" id="8QUH">
    <property type="method" value="X-ray"/>
    <property type="resolution" value="1.55 A"/>
    <property type="chains" value="A=133-363"/>
</dbReference>
<dbReference type="PDB" id="8QUI">
    <property type="method" value="X-ray"/>
    <property type="resolution" value="1.69 A"/>
    <property type="chains" value="A=133-363"/>
</dbReference>
<dbReference type="PDB" id="8QUJ">
    <property type="method" value="X-ray"/>
    <property type="resolution" value="1.63 A"/>
    <property type="chains" value="A=133-363"/>
</dbReference>
<dbReference type="PDB" id="8QUK">
    <property type="method" value="X-ray"/>
    <property type="resolution" value="1.38 A"/>
    <property type="chains" value="A=133-363"/>
</dbReference>
<dbReference type="PDB" id="8QUL">
    <property type="method" value="X-ray"/>
    <property type="resolution" value="1.67 A"/>
    <property type="chains" value="A=133-363"/>
</dbReference>
<dbReference type="PDB" id="8QUW">
    <property type="method" value="X-ray"/>
    <property type="resolution" value="2.02 A"/>
    <property type="chains" value="A=133-363"/>
</dbReference>
<dbReference type="PDB" id="8QUX">
    <property type="method" value="X-ray"/>
    <property type="resolution" value="2.30 A"/>
    <property type="chains" value="A=133-363"/>
</dbReference>
<dbReference type="PDB" id="8QUY">
    <property type="method" value="X-ray"/>
    <property type="resolution" value="1.88 A"/>
    <property type="chains" value="A=133-363"/>
</dbReference>
<dbReference type="PDB" id="8QV1">
    <property type="method" value="X-ray"/>
    <property type="resolution" value="2.20 A"/>
    <property type="chains" value="A=133-363"/>
</dbReference>
<dbReference type="PDB" id="8QV4">
    <property type="method" value="X-ray"/>
    <property type="resolution" value="2.70 A"/>
    <property type="chains" value="A=133-363"/>
</dbReference>
<dbReference type="PDB" id="8QV9">
    <property type="method" value="X-ray"/>
    <property type="resolution" value="1.76 A"/>
    <property type="chains" value="A=133-363"/>
</dbReference>
<dbReference type="PDB" id="8QVA">
    <property type="method" value="X-ray"/>
    <property type="resolution" value="2.00 A"/>
    <property type="chains" value="A=133-363"/>
</dbReference>
<dbReference type="PDB" id="8TY6">
    <property type="method" value="EM"/>
    <property type="resolution" value="3.30 A"/>
    <property type="chains" value="A/B/C/D/E/F=133-363"/>
</dbReference>
<dbReference type="PDB" id="9D6D">
    <property type="method" value="EM"/>
    <property type="resolution" value="2.18 A"/>
    <property type="chains" value="A/B/C/D/E/F/G/H/I/J/K/L/M/N/O/P/Q/R=143-371"/>
</dbReference>
<dbReference type="PDB" id="9D6E">
    <property type="method" value="EM"/>
    <property type="resolution" value="3.09 A"/>
    <property type="chains" value="A/B/C/D/E/F/G/H/I/J/K/L/M/N/O/P/Q/R=143-371"/>
</dbReference>
<dbReference type="PDB" id="9D88">
    <property type="method" value="EM"/>
    <property type="resolution" value="3.18 A"/>
    <property type="chains" value="A/B/C/D/E/F/G/H/I/J/K/L/M/N/O/P/Q/R=143-371"/>
</dbReference>
<dbReference type="PDB" id="9H1P">
    <property type="method" value="EM"/>
    <property type="resolution" value="3.10 A"/>
    <property type="chains" value="A/C/E/G/I/K/M/O/Q/S/U/W=2-132, B/D/F/H/J/L/N/P/R/T/V/X=433-448"/>
</dbReference>
<dbReference type="PDBsum" id="1GWP"/>
<dbReference type="PDBsum" id="2C55"/>
<dbReference type="PDBsum" id="2MGU"/>
<dbReference type="PDBsum" id="3GV2"/>
<dbReference type="PDBsum" id="4U0A"/>
<dbReference type="PDBsum" id="4U0B"/>
<dbReference type="PDBsum" id="4U0C"/>
<dbReference type="PDBsum" id="4U0D"/>
<dbReference type="PDBsum" id="4U0E"/>
<dbReference type="PDBsum" id="4U0F"/>
<dbReference type="PDBsum" id="4XFX"/>
<dbReference type="PDBsum" id="4XFY"/>
<dbReference type="PDBsum" id="4XFZ"/>
<dbReference type="PDBsum" id="4XRO"/>
<dbReference type="PDBsum" id="4XRQ"/>
<dbReference type="PDBsum" id="5HGL"/>
<dbReference type="PDBsum" id="5HGM"/>
<dbReference type="PDBsum" id="5HGN"/>
<dbReference type="PDBsum" id="5HGO"/>
<dbReference type="PDBsum" id="5HGP"/>
<dbReference type="PDBsum" id="5IRT"/>
<dbReference type="PDBsum" id="5JPA"/>
<dbReference type="PDBsum" id="5L93"/>
<dbReference type="PDBsum" id="5O2U"/>
<dbReference type="PDBsum" id="5TSV"/>
<dbReference type="PDBsum" id="5TSX"/>
<dbReference type="PDBsum" id="5UPW"/>
<dbReference type="PDBsum" id="5W4O"/>
<dbReference type="PDBsum" id="5W4P"/>
<dbReference type="PDBsum" id="5W4Q"/>
<dbReference type="PDBsum" id="6AXR"/>
<dbReference type="PDBsum" id="6AXS"/>
<dbReference type="PDBsum" id="6AXT"/>
<dbReference type="PDBsum" id="6AXV"/>
<dbReference type="PDBsum" id="6AXW"/>
<dbReference type="PDBsum" id="6AXX"/>
<dbReference type="PDBsum" id="6AXY"/>
<dbReference type="PDBsum" id="6AY9"/>
<dbReference type="PDBsum" id="6AYA"/>
<dbReference type="PDBsum" id="6B2G"/>
<dbReference type="PDBsum" id="6B2H"/>
<dbReference type="PDBsum" id="6B2I"/>
<dbReference type="PDBsum" id="6B2J"/>
<dbReference type="PDBsum" id="6B2K"/>
<dbReference type="PDBsum" id="6BHS"/>
<dbReference type="PDBsum" id="6BHT"/>
<dbReference type="PDBsum" id="6ECN"/>
<dbReference type="PDBsum" id="6H09"/>
<dbReference type="PDBsum" id="6MQA"/>
<dbReference type="PDBsum" id="6MQO"/>
<dbReference type="PDBsum" id="6MQP"/>
<dbReference type="PDBsum" id="6OBH"/>
<dbReference type="PDBsum" id="6OMT"/>
<dbReference type="PDBsum" id="6PU1"/>
<dbReference type="PDBsum" id="6R6Q"/>
<dbReference type="PDBsum" id="6RWG"/>
<dbReference type="PDBsum" id="6V2F"/>
<dbReference type="PDBsum" id="6VKV"/>
<dbReference type="PDBsum" id="6VWS"/>
<dbReference type="PDBsum" id="6WAP"/>
<dbReference type="PDBsum" id="6X63"/>
<dbReference type="PDBsum" id="7E1J"/>
<dbReference type="PDBsum" id="7JXR"/>
<dbReference type="PDBsum" id="7JXS"/>
<dbReference type="PDBsum" id="7M9F"/>
<dbReference type="PDBsum" id="7MKC"/>
<dbReference type="PDBsum" id="7MN0"/>
<dbReference type="PDBsum" id="7N9U"/>
<dbReference type="PDBsum" id="7N9V"/>
<dbReference type="PDBsum" id="7OVQ"/>
<dbReference type="PDBsum" id="7OVR"/>
<dbReference type="PDBsum" id="7P3O"/>
<dbReference type="PDBsum" id="7QDF"/>
<dbReference type="PDBsum" id="7R7P"/>
<dbReference type="PDBsum" id="7R7Q"/>
<dbReference type="PDBsum" id="7RAO"/>
<dbReference type="PDBsum" id="7RAR"/>
<dbReference type="PDBsum" id="7RHM"/>
<dbReference type="PDBsum" id="7RHN"/>
<dbReference type="PDBsum" id="7RJ2"/>
<dbReference type="PDBsum" id="7RJ4"/>
<dbReference type="PDBsum" id="7T13"/>
<dbReference type="PDBsum" id="7TBP"/>
<dbReference type="PDBsum" id="7URN"/>
<dbReference type="PDBsum" id="7URT"/>
<dbReference type="PDBsum" id="8CKV"/>
<dbReference type="PDBsum" id="8CKW"/>
<dbReference type="PDBsum" id="8CKX"/>
<dbReference type="PDBsum" id="8CKY"/>
<dbReference type="PDBsum" id="8CKZ"/>
<dbReference type="PDBsum" id="8CL0"/>
<dbReference type="PDBsum" id="8CL1"/>
<dbReference type="PDBsum" id="8CL2"/>
<dbReference type="PDBsum" id="8CL3"/>
<dbReference type="PDBsum" id="8CL4"/>
<dbReference type="PDBsum" id="8EEP"/>
<dbReference type="PDBsum" id="8EET"/>
<dbReference type="PDBsum" id="8EJL"/>
<dbReference type="PDBsum" id="8FIU"/>
<dbReference type="PDBsum" id="8G6K"/>
<dbReference type="PDBsum" id="8G6L"/>
<dbReference type="PDBsum" id="8G6M"/>
<dbReference type="PDBsum" id="8G6N"/>
<dbReference type="PDBsum" id="8G6O"/>
<dbReference type="PDBsum" id="8GDV"/>
<dbReference type="PDBsum" id="8QUB"/>
<dbReference type="PDBsum" id="8QUH"/>
<dbReference type="PDBsum" id="8QUI"/>
<dbReference type="PDBsum" id="8QUJ"/>
<dbReference type="PDBsum" id="8QUK"/>
<dbReference type="PDBsum" id="8QUL"/>
<dbReference type="PDBsum" id="8QUW"/>
<dbReference type="PDBsum" id="8QUX"/>
<dbReference type="PDBsum" id="8QUY"/>
<dbReference type="PDBsum" id="8QV1"/>
<dbReference type="PDBsum" id="8QV4"/>
<dbReference type="PDBsum" id="8QV9"/>
<dbReference type="PDBsum" id="8QVA"/>
<dbReference type="PDBsum" id="8TY6"/>
<dbReference type="PDBsum" id="9D6D"/>
<dbReference type="PDBsum" id="9D6E"/>
<dbReference type="PDBsum" id="9D88"/>
<dbReference type="PDBsum" id="9H1P"/>
<dbReference type="BMRB" id="P12493"/>
<dbReference type="EMDB" id="EMD-26715"/>
<dbReference type="EMDB" id="EMD-28186"/>
<dbReference type="EMDB" id="EMD-4015"/>
<dbReference type="EMDB" id="EMD-41711"/>
<dbReference type="EMDB" id="EMD-46594"/>
<dbReference type="EMDB" id="EMD-46595"/>
<dbReference type="EMDB" id="EMD-46631"/>
<dbReference type="EMDB" id="EMD-51769"/>
<dbReference type="EMDB" id="EMD-52221"/>
<dbReference type="EMDB" id="EMD-52222"/>
<dbReference type="EMDB" id="EMD-8595"/>
<dbReference type="SMR" id="P12493"/>
<dbReference type="DrugCentral" id="P12493"/>
<dbReference type="iPTMnet" id="P12493"/>
<dbReference type="ABCD" id="P12493">
    <property type="antibodies" value="1 sequenced antibody"/>
</dbReference>
<dbReference type="Reactome" id="R-HSA-1169408">
    <property type="pathway name" value="ISG15 antiviral mechanism"/>
</dbReference>
<dbReference type="EvolutionaryTrace" id="P12493"/>
<dbReference type="PRO" id="PR:P12493"/>
<dbReference type="GO" id="GO:0042025">
    <property type="term" value="C:host cell nucleus"/>
    <property type="evidence" value="ECO:0007669"/>
    <property type="project" value="UniProtKB-SubCell"/>
</dbReference>
<dbReference type="GO" id="GO:0020002">
    <property type="term" value="C:host cell plasma membrane"/>
    <property type="evidence" value="ECO:0007669"/>
    <property type="project" value="UniProtKB-SubCell"/>
</dbReference>
<dbReference type="GO" id="GO:0072494">
    <property type="term" value="C:host multivesicular body"/>
    <property type="evidence" value="ECO:0007669"/>
    <property type="project" value="UniProtKB-SubCell"/>
</dbReference>
<dbReference type="GO" id="GO:0016020">
    <property type="term" value="C:membrane"/>
    <property type="evidence" value="ECO:0007669"/>
    <property type="project" value="UniProtKB-KW"/>
</dbReference>
<dbReference type="GO" id="GO:0019013">
    <property type="term" value="C:viral nucleocapsid"/>
    <property type="evidence" value="ECO:0007669"/>
    <property type="project" value="UniProtKB-KW"/>
</dbReference>
<dbReference type="GO" id="GO:0055036">
    <property type="term" value="C:virion membrane"/>
    <property type="evidence" value="ECO:0007669"/>
    <property type="project" value="UniProtKB-SubCell"/>
</dbReference>
<dbReference type="GO" id="GO:0003723">
    <property type="term" value="F:RNA binding"/>
    <property type="evidence" value="ECO:0007669"/>
    <property type="project" value="UniProtKB-KW"/>
</dbReference>
<dbReference type="GO" id="GO:0005198">
    <property type="term" value="F:structural molecule activity"/>
    <property type="evidence" value="ECO:0007669"/>
    <property type="project" value="InterPro"/>
</dbReference>
<dbReference type="GO" id="GO:0008270">
    <property type="term" value="F:zinc ion binding"/>
    <property type="evidence" value="ECO:0007669"/>
    <property type="project" value="UniProtKB-KW"/>
</dbReference>
<dbReference type="GO" id="GO:0039702">
    <property type="term" value="P:viral budding via host ESCRT complex"/>
    <property type="evidence" value="ECO:0007669"/>
    <property type="project" value="UniProtKB-KW"/>
</dbReference>
<dbReference type="GO" id="GO:0075523">
    <property type="term" value="P:viral translational frameshifting"/>
    <property type="evidence" value="ECO:0007669"/>
    <property type="project" value="UniProtKB-KW"/>
</dbReference>
<dbReference type="FunFam" id="1.10.1200.30:FF:000001">
    <property type="entry name" value="Gag polyprotein"/>
    <property type="match status" value="1"/>
</dbReference>
<dbReference type="FunFam" id="1.10.150.90:FF:000001">
    <property type="entry name" value="Gag polyprotein"/>
    <property type="match status" value="1"/>
</dbReference>
<dbReference type="FunFam" id="1.10.375.10:FF:000001">
    <property type="entry name" value="Gag polyprotein"/>
    <property type="match status" value="1"/>
</dbReference>
<dbReference type="FunFam" id="1.20.5.760:FF:000001">
    <property type="entry name" value="Gag polyprotein"/>
    <property type="match status" value="1"/>
</dbReference>
<dbReference type="FunFam" id="4.10.60.10:FF:000001">
    <property type="entry name" value="Gag polyprotein"/>
    <property type="match status" value="1"/>
</dbReference>
<dbReference type="Gene3D" id="1.10.1200.30">
    <property type="match status" value="1"/>
</dbReference>
<dbReference type="Gene3D" id="6.10.250.390">
    <property type="match status" value="1"/>
</dbReference>
<dbReference type="Gene3D" id="1.10.375.10">
    <property type="entry name" value="Human Immunodeficiency Virus Type 1 Capsid Protein"/>
    <property type="match status" value="1"/>
</dbReference>
<dbReference type="Gene3D" id="1.10.150.90">
    <property type="entry name" value="Immunodeficiency lentiviruses, gag gene matrix protein p17"/>
    <property type="match status" value="1"/>
</dbReference>
<dbReference type="Gene3D" id="1.20.5.760">
    <property type="entry name" value="Single helix bin"/>
    <property type="match status" value="1"/>
</dbReference>
<dbReference type="Gene3D" id="4.10.60.10">
    <property type="entry name" value="Zinc finger, CCHC-type"/>
    <property type="match status" value="1"/>
</dbReference>
<dbReference type="InterPro" id="IPR045345">
    <property type="entry name" value="Gag_p24_C"/>
</dbReference>
<dbReference type="InterPro" id="IPR014817">
    <property type="entry name" value="Gag_p6"/>
</dbReference>
<dbReference type="InterPro" id="IPR000071">
    <property type="entry name" value="Lentvrl_matrix_N"/>
</dbReference>
<dbReference type="InterPro" id="IPR012344">
    <property type="entry name" value="Matrix_HIV/RSV_N"/>
</dbReference>
<dbReference type="InterPro" id="IPR050195">
    <property type="entry name" value="Primate_lentivir_Gag_pol-like"/>
</dbReference>
<dbReference type="InterPro" id="IPR008916">
    <property type="entry name" value="Retrov_capsid_C"/>
</dbReference>
<dbReference type="InterPro" id="IPR008919">
    <property type="entry name" value="Retrov_capsid_N"/>
</dbReference>
<dbReference type="InterPro" id="IPR010999">
    <property type="entry name" value="Retrovr_matrix"/>
</dbReference>
<dbReference type="InterPro" id="IPR001878">
    <property type="entry name" value="Znf_CCHC"/>
</dbReference>
<dbReference type="InterPro" id="IPR036875">
    <property type="entry name" value="Znf_CCHC_sf"/>
</dbReference>
<dbReference type="PANTHER" id="PTHR40389:SF4">
    <property type="match status" value="1"/>
</dbReference>
<dbReference type="PANTHER" id="PTHR40389">
    <property type="entry name" value="ENDOGENOUS RETROVIRUS GROUP K MEMBER 24 GAG POLYPROTEIN-RELATED"/>
    <property type="match status" value="1"/>
</dbReference>
<dbReference type="Pfam" id="PF00540">
    <property type="entry name" value="Gag_p17"/>
    <property type="match status" value="1"/>
</dbReference>
<dbReference type="Pfam" id="PF00607">
    <property type="entry name" value="Gag_p24"/>
    <property type="match status" value="1"/>
</dbReference>
<dbReference type="Pfam" id="PF19317">
    <property type="entry name" value="Gag_p24_C"/>
    <property type="match status" value="1"/>
</dbReference>
<dbReference type="Pfam" id="PF08705">
    <property type="entry name" value="Gag_p6"/>
    <property type="match status" value="1"/>
</dbReference>
<dbReference type="Pfam" id="PF00098">
    <property type="entry name" value="zf-CCHC"/>
    <property type="match status" value="2"/>
</dbReference>
<dbReference type="PRINTS" id="PR00234">
    <property type="entry name" value="HIV1MATRIX"/>
</dbReference>
<dbReference type="SMART" id="SM00343">
    <property type="entry name" value="ZnF_C2HC"/>
    <property type="match status" value="2"/>
</dbReference>
<dbReference type="SUPFAM" id="SSF47836">
    <property type="entry name" value="Retroviral matrix proteins"/>
    <property type="match status" value="1"/>
</dbReference>
<dbReference type="SUPFAM" id="SSF47353">
    <property type="entry name" value="Retrovirus capsid dimerization domain-like"/>
    <property type="match status" value="1"/>
</dbReference>
<dbReference type="SUPFAM" id="SSF47943">
    <property type="entry name" value="Retrovirus capsid protein, N-terminal core domain"/>
    <property type="match status" value="1"/>
</dbReference>
<dbReference type="SUPFAM" id="SSF57756">
    <property type="entry name" value="Retrovirus zinc finger-like domains"/>
    <property type="match status" value="1"/>
</dbReference>
<dbReference type="PROSITE" id="PS50158">
    <property type="entry name" value="ZF_CCHC"/>
    <property type="match status" value="2"/>
</dbReference>
<protein>
    <recommendedName>
        <fullName>Gag polyprotein</fullName>
    </recommendedName>
    <alternativeName>
        <fullName>Pr55Gag</fullName>
    </alternativeName>
    <component>
        <recommendedName>
            <fullName>Matrix protein p17</fullName>
            <shortName>MA</shortName>
        </recommendedName>
    </component>
    <component>
        <recommendedName>
            <fullName>Capsid protein p24</fullName>
            <shortName>CA</shortName>
        </recommendedName>
    </component>
    <component>
        <recommendedName>
            <fullName evidence="25">Spacer peptide 1</fullName>
            <shortName>SP1</shortName>
        </recommendedName>
        <alternativeName>
            <fullName>p2</fullName>
        </alternativeName>
    </component>
    <component>
        <recommendedName>
            <fullName>Nucleocapsid protein p7</fullName>
            <shortName>NC</shortName>
        </recommendedName>
    </component>
    <component>
        <recommendedName>
            <fullName evidence="25">Spacer peptide 2</fullName>
            <shortName>SP2</shortName>
        </recommendedName>
        <alternativeName>
            <fullName>p1</fullName>
        </alternativeName>
    </component>
    <component>
        <recommendedName>
            <fullName>p6-gag</fullName>
        </recommendedName>
    </component>
</protein>
<sequence>MGARASVLSGGELDKWEKIRLRPGGKKQYKLKHIVWASRELERFAVNPGLLETSEGCRQILGQLQPSLQTGSEELRSLYNTIAVLYCVHQRIDVKDTKEALDKIEEEQNKSKKKAQQAAADTGNNSQVSQNYPIVQNLQGQMVHQAISPRTLNAWVKVVEEKAFSPEVIPMFSALSEGATPQDLNTMLNTVGGHQAAMQMLKETINEEAAEWDRLHPVHAGPIAPGQMREPRGSDIAGTTSTLQEQIGWMTHNPPIPVGEIYKRWIILGLNKIVRMYSPTSILDIRQGPKEPFRDYVDRFYKTLRAEQASQEVKNWMTETLLVQNANPDCKTILKALGPGATLEEMMTACQGVGGPGHKARVLAEAMSQVTNPATIMIQKGNFRNQRKTVKCFNCGKEGHIAKNCRAPRKKGCWKCGKEGHQMKDCTERQANFLGKIWPSHKGRPGNFLQSRPEPTAPPEESFRFGEETTTPSQKQEPIDKELYPLASLRSLFGSDPSSQ</sequence>